<gene>
    <name type="primary">ND5</name>
    <name type="synonym">NAD5</name>
</gene>
<name>NU5M_CHOCR</name>
<comment type="function">
    <text evidence="1">Core subunit of the mitochondrial membrane respiratory chain NADH dehydrogenase (Complex I) that is believed to belong to the minimal assembly required for catalysis. Complex I functions in the transfer of electrons from NADH to the respiratory chain. The immediate electron acceptor for the enzyme is believed to be ubiquinone (By similarity).</text>
</comment>
<comment type="catalytic activity">
    <reaction>
        <text>a ubiquinone + NADH + 5 H(+)(in) = a ubiquinol + NAD(+) + 4 H(+)(out)</text>
        <dbReference type="Rhea" id="RHEA:29091"/>
        <dbReference type="Rhea" id="RHEA-COMP:9565"/>
        <dbReference type="Rhea" id="RHEA-COMP:9566"/>
        <dbReference type="ChEBI" id="CHEBI:15378"/>
        <dbReference type="ChEBI" id="CHEBI:16389"/>
        <dbReference type="ChEBI" id="CHEBI:17976"/>
        <dbReference type="ChEBI" id="CHEBI:57540"/>
        <dbReference type="ChEBI" id="CHEBI:57945"/>
        <dbReference type="EC" id="7.1.1.2"/>
    </reaction>
</comment>
<comment type="subcellular location">
    <subcellularLocation>
        <location evidence="1">Mitochondrion inner membrane</location>
        <topology evidence="1">Multi-pass membrane protein</topology>
    </subcellularLocation>
</comment>
<comment type="similarity">
    <text evidence="3">Belongs to the complex I subunit 5 family.</text>
</comment>
<proteinExistence type="inferred from homology"/>
<protein>
    <recommendedName>
        <fullName>NADH-ubiquinone oxidoreductase chain 5</fullName>
        <ecNumber>7.1.1.2</ecNumber>
    </recommendedName>
    <alternativeName>
        <fullName>NADH dehydrogenase subunit 5</fullName>
    </alternativeName>
</protein>
<organism>
    <name type="scientific">Chondrus crispus</name>
    <name type="common">Carrageen Irish moss</name>
    <name type="synonym">Polymorpha crispa</name>
    <dbReference type="NCBI Taxonomy" id="2769"/>
    <lineage>
        <taxon>Eukaryota</taxon>
        <taxon>Rhodophyta</taxon>
        <taxon>Florideophyceae</taxon>
        <taxon>Rhodymeniophycidae</taxon>
        <taxon>Gigartinales</taxon>
        <taxon>Gigartinaceae</taxon>
        <taxon>Chondrus</taxon>
    </lineage>
</organism>
<keyword id="KW-0249">Electron transport</keyword>
<keyword id="KW-0472">Membrane</keyword>
<keyword id="KW-0496">Mitochondrion</keyword>
<keyword id="KW-0999">Mitochondrion inner membrane</keyword>
<keyword id="KW-0520">NAD</keyword>
<keyword id="KW-0679">Respiratory chain</keyword>
<keyword id="KW-1278">Translocase</keyword>
<keyword id="KW-0812">Transmembrane</keyword>
<keyword id="KW-1133">Transmembrane helix</keyword>
<keyword id="KW-0813">Transport</keyword>
<keyword id="KW-0830">Ubiquinone</keyword>
<feature type="chain" id="PRO_0000118081" description="NADH-ubiquinone oxidoreductase chain 5">
    <location>
        <begin position="1"/>
        <end position="666"/>
    </location>
</feature>
<feature type="transmembrane region" description="Helical" evidence="2">
    <location>
        <begin position="3"/>
        <end position="23"/>
    </location>
</feature>
<feature type="transmembrane region" description="Helical" evidence="2">
    <location>
        <begin position="31"/>
        <end position="51"/>
    </location>
</feature>
<feature type="transmembrane region" description="Helical" evidence="2">
    <location>
        <begin position="59"/>
        <end position="78"/>
    </location>
</feature>
<feature type="transmembrane region" description="Helical" evidence="2">
    <location>
        <begin position="82"/>
        <end position="101"/>
    </location>
</feature>
<feature type="transmembrane region" description="Helical" evidence="2">
    <location>
        <begin position="119"/>
        <end position="139"/>
    </location>
</feature>
<feature type="transmembrane region" description="Helical" evidence="2">
    <location>
        <begin position="168"/>
        <end position="190"/>
    </location>
</feature>
<feature type="transmembrane region" description="Helical" evidence="2">
    <location>
        <begin position="211"/>
        <end position="231"/>
    </location>
</feature>
<feature type="transmembrane region" description="Helical" evidence="2">
    <location>
        <begin position="251"/>
        <end position="271"/>
    </location>
</feature>
<feature type="transmembrane region" description="Helical" evidence="2">
    <location>
        <begin position="283"/>
        <end position="303"/>
    </location>
</feature>
<feature type="transmembrane region" description="Helical" evidence="2">
    <location>
        <begin position="311"/>
        <end position="333"/>
    </location>
</feature>
<feature type="transmembrane region" description="Helical" evidence="2">
    <location>
        <begin position="337"/>
        <end position="357"/>
    </location>
</feature>
<feature type="transmembrane region" description="Helical" evidence="2">
    <location>
        <begin position="375"/>
        <end position="395"/>
    </location>
</feature>
<feature type="transmembrane region" description="Helical" evidence="2">
    <location>
        <begin position="421"/>
        <end position="441"/>
    </location>
</feature>
<feature type="transmembrane region" description="Helical" evidence="2">
    <location>
        <begin position="467"/>
        <end position="487"/>
    </location>
</feature>
<feature type="transmembrane region" description="Helical" evidence="2">
    <location>
        <begin position="524"/>
        <end position="544"/>
    </location>
</feature>
<feature type="transmembrane region" description="Helical" evidence="2">
    <location>
        <begin position="572"/>
        <end position="594"/>
    </location>
</feature>
<feature type="transmembrane region" description="Helical" evidence="2">
    <location>
        <begin position="629"/>
        <end position="649"/>
    </location>
</feature>
<sequence length="666" mass="75629">MYLLILFLPLLGSLISGFGGRWLGCRGTNTFSTLCVVVSSLFSLLAFFEIGLTNTTCTIFLVSWIKSGAFYVSWGFLFDSLTVTMLVVITLVSSLVHIYSIKYMENDPHQPRFMSYLEIFTFFMLILVTADNLIQMFLGWEGVGLASYLLINFWYTRLAANQSAIKALIVNRVGDFGLSLGIFLIFWVFNSVDYSVIFSLVPLFDNQFLTFLGFKLHVLTLISLFLFIGAIGKSAQLGLHTWLPDAMEGPTPVSALIHAATMVTAGVFLMIRFSPLLEFSPTILFILITFGSLTAFFAAVTGVFQHDLKRVIAYSTCSQLGYMIFSCGMSCYDVSLFHLANHAFFKALLFLSAGSVIHAVSNEQDMRRMGSLLKFMPLTYSVMLIGTLALIGFPFLTGFYSKDFILELTQISSYSNLQMSYISFACWLGTMSVFFTSFYSFRLIYLTFLNNTNLAKSSLNLVHESSLLMIFPLIILSIGSIFAGYLIRDLFVGSGSDFWGAAIFILPKHSTFIEAEELPIVVKWLPFILSLLGIFFASFVQIFLKTFYFKSNLQNLLSFFTFLINKKWYWDVLYNRLIVLPILNFGYSISFKILDRGFIELSGPYGFTKFVSFWSQILIKLQTGQITHYLFFMIFTFCSFSIILVYSYINLTFNLLLLFFTLFFFI</sequence>
<reference key="1">
    <citation type="journal article" date="1995" name="J. Mol. Biol.">
        <title>Complete sequence of the mitochondrial DNA of the rhodophyte Chondrus crispus (Gigartinales). Gene content and genome organization.</title>
        <authorList>
            <person name="Leblanc C."/>
            <person name="Boyen C."/>
            <person name="Richard O."/>
            <person name="Bonnard G."/>
            <person name="Grienenberger J.-M."/>
            <person name="Kloareg B."/>
        </authorList>
    </citation>
    <scope>NUCLEOTIDE SEQUENCE [GENOMIC DNA]</scope>
    <source>
        <tissue>Apices</tissue>
    </source>
</reference>
<evidence type="ECO:0000250" key="1"/>
<evidence type="ECO:0000255" key="2"/>
<evidence type="ECO:0000305" key="3"/>
<accession>P48920</accession>
<geneLocation type="mitochondrion"/>
<dbReference type="EC" id="7.1.1.2"/>
<dbReference type="EMBL" id="Z47547">
    <property type="protein sequence ID" value="CAA87625.1"/>
    <property type="molecule type" value="Genomic_DNA"/>
</dbReference>
<dbReference type="PIR" id="S59109">
    <property type="entry name" value="S59109"/>
</dbReference>
<dbReference type="RefSeq" id="NP_062497.1">
    <property type="nucleotide sequence ID" value="NC_001677.2"/>
</dbReference>
<dbReference type="SMR" id="P48920"/>
<dbReference type="GeneID" id="809387"/>
<dbReference type="KEGG" id="ccp:ChcroMp18"/>
<dbReference type="GO" id="GO:0005743">
    <property type="term" value="C:mitochondrial inner membrane"/>
    <property type="evidence" value="ECO:0007669"/>
    <property type="project" value="UniProtKB-SubCell"/>
</dbReference>
<dbReference type="GO" id="GO:0008137">
    <property type="term" value="F:NADH dehydrogenase (ubiquinone) activity"/>
    <property type="evidence" value="ECO:0007669"/>
    <property type="project" value="UniProtKB-EC"/>
</dbReference>
<dbReference type="GO" id="GO:0042773">
    <property type="term" value="P:ATP synthesis coupled electron transport"/>
    <property type="evidence" value="ECO:0007669"/>
    <property type="project" value="InterPro"/>
</dbReference>
<dbReference type="GO" id="GO:0015990">
    <property type="term" value="P:electron transport coupled proton transport"/>
    <property type="evidence" value="ECO:0007669"/>
    <property type="project" value="TreeGrafter"/>
</dbReference>
<dbReference type="Gene3D" id="1.20.5.2700">
    <property type="match status" value="1"/>
</dbReference>
<dbReference type="InterPro" id="IPR010934">
    <property type="entry name" value="NADH_DH_su5_C"/>
</dbReference>
<dbReference type="InterPro" id="IPR018393">
    <property type="entry name" value="NADHpl_OxRdtase_5_subgr"/>
</dbReference>
<dbReference type="InterPro" id="IPR001750">
    <property type="entry name" value="ND/Mrp_TM"/>
</dbReference>
<dbReference type="InterPro" id="IPR003945">
    <property type="entry name" value="NU5C-like"/>
</dbReference>
<dbReference type="InterPro" id="IPR001516">
    <property type="entry name" value="Proton_antipo_N"/>
</dbReference>
<dbReference type="NCBIfam" id="TIGR01974">
    <property type="entry name" value="NDH_I_L"/>
    <property type="match status" value="1"/>
</dbReference>
<dbReference type="NCBIfam" id="NF005141">
    <property type="entry name" value="PRK06590.1"/>
    <property type="match status" value="1"/>
</dbReference>
<dbReference type="PANTHER" id="PTHR42829">
    <property type="entry name" value="NADH-UBIQUINONE OXIDOREDUCTASE CHAIN 5"/>
    <property type="match status" value="1"/>
</dbReference>
<dbReference type="PANTHER" id="PTHR42829:SF2">
    <property type="entry name" value="NADH-UBIQUINONE OXIDOREDUCTASE CHAIN 5"/>
    <property type="match status" value="1"/>
</dbReference>
<dbReference type="Pfam" id="PF06455">
    <property type="entry name" value="NADH5_C"/>
    <property type="match status" value="1"/>
</dbReference>
<dbReference type="Pfam" id="PF00361">
    <property type="entry name" value="Proton_antipo_M"/>
    <property type="match status" value="1"/>
</dbReference>
<dbReference type="Pfam" id="PF00662">
    <property type="entry name" value="Proton_antipo_N"/>
    <property type="match status" value="1"/>
</dbReference>
<dbReference type="PRINTS" id="PR01434">
    <property type="entry name" value="NADHDHGNASE5"/>
</dbReference>
<dbReference type="PRINTS" id="PR01435">
    <property type="entry name" value="NPOXDRDTASE5"/>
</dbReference>